<reference key="1">
    <citation type="journal article" date="2002" name="Nucleic Acids Res.">
        <title>Genome sequence of Shigella flexneri 2a: insights into pathogenicity through comparison with genomes of Escherichia coli K12 and O157.</title>
        <authorList>
            <person name="Jin Q."/>
            <person name="Yuan Z."/>
            <person name="Xu J."/>
            <person name="Wang Y."/>
            <person name="Shen Y."/>
            <person name="Lu W."/>
            <person name="Wang J."/>
            <person name="Liu H."/>
            <person name="Yang J."/>
            <person name="Yang F."/>
            <person name="Zhang X."/>
            <person name="Zhang J."/>
            <person name="Yang G."/>
            <person name="Wu H."/>
            <person name="Qu D."/>
            <person name="Dong J."/>
            <person name="Sun L."/>
            <person name="Xue Y."/>
            <person name="Zhao A."/>
            <person name="Gao Y."/>
            <person name="Zhu J."/>
            <person name="Kan B."/>
            <person name="Ding K."/>
            <person name="Chen S."/>
            <person name="Cheng H."/>
            <person name="Yao Z."/>
            <person name="He B."/>
            <person name="Chen R."/>
            <person name="Ma D."/>
            <person name="Qiang B."/>
            <person name="Wen Y."/>
            <person name="Hou Y."/>
            <person name="Yu J."/>
        </authorList>
    </citation>
    <scope>NUCLEOTIDE SEQUENCE [LARGE SCALE GENOMIC DNA]</scope>
    <source>
        <strain>301 / Serotype 2a</strain>
    </source>
</reference>
<reference key="2">
    <citation type="journal article" date="2003" name="Infect. Immun.">
        <title>Complete genome sequence and comparative genomics of Shigella flexneri serotype 2a strain 2457T.</title>
        <authorList>
            <person name="Wei J."/>
            <person name="Goldberg M.B."/>
            <person name="Burland V."/>
            <person name="Venkatesan M.M."/>
            <person name="Deng W."/>
            <person name="Fournier G."/>
            <person name="Mayhew G.F."/>
            <person name="Plunkett G. III"/>
            <person name="Rose D.J."/>
            <person name="Darling A."/>
            <person name="Mau B."/>
            <person name="Perna N.T."/>
            <person name="Payne S.M."/>
            <person name="Runyen-Janecky L.J."/>
            <person name="Zhou S."/>
            <person name="Schwartz D.C."/>
            <person name="Blattner F.R."/>
        </authorList>
    </citation>
    <scope>NUCLEOTIDE SEQUENCE [LARGE SCALE GENOMIC DNA]</scope>
    <source>
        <strain>ATCC 700930 / 2457T / Serotype 2a</strain>
    </source>
</reference>
<evidence type="ECO:0000305" key="1"/>
<proteinExistence type="predicted"/>
<keyword id="KW-1185">Reference proteome</keyword>
<dbReference type="EMBL" id="AE005674">
    <property type="protein sequence ID" value="AAN42082.1"/>
    <property type="molecule type" value="Genomic_DNA"/>
</dbReference>
<dbReference type="EMBL" id="AE014073">
    <property type="protein sequence ID" value="AAP15959.1"/>
    <property type="molecule type" value="Genomic_DNA"/>
</dbReference>
<dbReference type="RefSeq" id="NP_706375.1">
    <property type="nucleotide sequence ID" value="NC_004337.2"/>
</dbReference>
<dbReference type="RefSeq" id="WP_000365187.1">
    <property type="nucleotide sequence ID" value="NZ_CP123365.1"/>
</dbReference>
<dbReference type="STRING" id="198214.SF0427"/>
<dbReference type="PaxDb" id="198214-SF0427"/>
<dbReference type="GeneID" id="1027724"/>
<dbReference type="KEGG" id="sfl:SF0427"/>
<dbReference type="KEGG" id="sfx:S0434"/>
<dbReference type="PATRIC" id="fig|198214.7.peg.489"/>
<dbReference type="HOGENOM" id="CLU_057525_3_0_6"/>
<dbReference type="Proteomes" id="UP000001006">
    <property type="component" value="Chromosome"/>
</dbReference>
<dbReference type="Proteomes" id="UP000002673">
    <property type="component" value="Chromosome"/>
</dbReference>
<dbReference type="CDD" id="cd14789">
    <property type="entry name" value="Tiki"/>
    <property type="match status" value="1"/>
</dbReference>
<dbReference type="InterPro" id="IPR002816">
    <property type="entry name" value="TraB/PrgY/GumN_fam"/>
</dbReference>
<dbReference type="InterPro" id="IPR047111">
    <property type="entry name" value="YbaP-like"/>
</dbReference>
<dbReference type="PANTHER" id="PTHR40590:SF1">
    <property type="entry name" value="CYTOPLASMIC PROTEIN"/>
    <property type="match status" value="1"/>
</dbReference>
<dbReference type="PANTHER" id="PTHR40590">
    <property type="entry name" value="CYTOPLASMIC PROTEIN-RELATED"/>
    <property type="match status" value="1"/>
</dbReference>
<dbReference type="Pfam" id="PF01963">
    <property type="entry name" value="TraB_PrgY_gumN"/>
    <property type="match status" value="1"/>
</dbReference>
<feature type="chain" id="PRO_0000168629" description="Uncharacterized protein YbaP">
    <location>
        <begin position="1"/>
        <end position="264"/>
    </location>
</feature>
<feature type="sequence conflict" description="In Ref. 2; AAP15959." evidence="1" ref="2">
    <original>S</original>
    <variation>F</variation>
    <location>
        <position position="34"/>
    </location>
</feature>
<sequence length="264" mass="29842">MDLLYRVKTLWAALRGNHYTWPAIDITLPGNRHSHLIGSIHMGSHDMAPLPTRLLKKLKNADALIVEADVSTSDTPFANLPACEALEERISEEQLQNLQHISQEMGISPSLFSTQPLWQIAMVLQATQAQKLGLRAEYGIDYQLLQAAKQQHKPVIELEGAENQIAMLLQLPDKGLALLDDTLTHWHTNARLLQQMMSWWLNAPPQNNDITLPNTFSQSLYDVLMHQRNLAWRDKLRAMPPGRYVVAVGALHLYGEGNLPQMLR</sequence>
<name>YBAP_SHIFL</name>
<accession>Q83M36</accession>
<gene>
    <name type="primary">ybaP</name>
    <name type="ordered locus">SF0427</name>
    <name type="ordered locus">S0434</name>
</gene>
<protein>
    <recommendedName>
        <fullName>Uncharacterized protein YbaP</fullName>
    </recommendedName>
</protein>
<organism>
    <name type="scientific">Shigella flexneri</name>
    <dbReference type="NCBI Taxonomy" id="623"/>
    <lineage>
        <taxon>Bacteria</taxon>
        <taxon>Pseudomonadati</taxon>
        <taxon>Pseudomonadota</taxon>
        <taxon>Gammaproteobacteria</taxon>
        <taxon>Enterobacterales</taxon>
        <taxon>Enterobacteriaceae</taxon>
        <taxon>Shigella</taxon>
    </lineage>
</organism>